<proteinExistence type="evidence at protein level"/>
<keyword id="KW-0963">Cytoplasm</keyword>
<keyword id="KW-0233">DNA recombination</keyword>
<keyword id="KW-0238">DNA-binding</keyword>
<keyword id="KW-0255">Endonuclease</keyword>
<keyword id="KW-0378">Hydrolase</keyword>
<keyword id="KW-0540">Nuclease</keyword>
<keyword id="KW-0614">Plasmid</keyword>
<keyword id="KW-1185">Reference proteome</keyword>
<comment type="function">
    <text evidence="1 2">Catalyzes the conservative, sequence-specific DNA breakage and reunion reaction that generates two hairpin telomeres from a replicated telomere substrate. Breaks two phosphodiester bonds in a single DNA duplex and joins each end with the opposite DNA strand to form covalently closed hairpin telomeres (PubMed:11804598, PubMed:12753185). In vitro relaxed-circular, open-circular and linearized plasmids, but not supercoiled DNA, are all substrates (PubMed:11804598). Cleavage is position-dependent relative to conserved sequence elements (PubMed:12753185).</text>
</comment>
<comment type="cofactor">
    <text evidence="1 2">No cofactors were found to be necessary.</text>
</comment>
<comment type="subcellular location">
    <subcellularLocation>
        <location evidence="4">Cytoplasm</location>
        <location evidence="4">Nucleoid</location>
    </subcellularLocation>
    <text evidence="5 6">Found at the end of hairpin DNA molecules in the area equivalent to eukaryotic telomeres.</text>
</comment>
<comment type="miscellaneous">
    <text evidence="1">This strain of B.burgdorferi has at least 12 linear replicons with covalently closed hairpin ends.</text>
</comment>
<accession>O50979</accession>
<organism>
    <name type="scientific">Borreliella burgdorferi (strain ATCC 35210 / DSM 4680 / CIP 102532 / B31)</name>
    <name type="common">Borrelia burgdorferi</name>
    <dbReference type="NCBI Taxonomy" id="224326"/>
    <lineage>
        <taxon>Bacteria</taxon>
        <taxon>Pseudomonadati</taxon>
        <taxon>Spirochaetota</taxon>
        <taxon>Spirochaetia</taxon>
        <taxon>Spirochaetales</taxon>
        <taxon>Borreliaceae</taxon>
        <taxon>Borreliella</taxon>
    </lineage>
</organism>
<gene>
    <name evidence="3" type="primary">resT</name>
    <name type="ordered locus">BB_B03</name>
</gene>
<reference key="1">
    <citation type="journal article" date="1997" name="Nature">
        <title>Genomic sequence of a Lyme disease spirochaete, Borrelia burgdorferi.</title>
        <authorList>
            <person name="Fraser C.M."/>
            <person name="Casjens S."/>
            <person name="Huang W.M."/>
            <person name="Sutton G.G."/>
            <person name="Clayton R.A."/>
            <person name="Lathigra R."/>
            <person name="White O."/>
            <person name="Ketchum K.A."/>
            <person name="Dodson R.J."/>
            <person name="Hickey E.K."/>
            <person name="Gwinn M.L."/>
            <person name="Dougherty B.A."/>
            <person name="Tomb J.-F."/>
            <person name="Fleischmann R.D."/>
            <person name="Richardson D.L."/>
            <person name="Peterson J.D."/>
            <person name="Kerlavage A.R."/>
            <person name="Quackenbush J."/>
            <person name="Salzberg S.L."/>
            <person name="Hanson M."/>
            <person name="van Vugt R."/>
            <person name="Palmer N."/>
            <person name="Adams M.D."/>
            <person name="Gocayne J.D."/>
            <person name="Weidman J.F."/>
            <person name="Utterback T.R."/>
            <person name="Watthey L."/>
            <person name="McDonald L.A."/>
            <person name="Artiach P."/>
            <person name="Bowman C."/>
            <person name="Garland S.A."/>
            <person name="Fujii C."/>
            <person name="Cotton M.D."/>
            <person name="Horst K."/>
            <person name="Roberts K.M."/>
            <person name="Hatch B."/>
            <person name="Smith H.O."/>
            <person name="Venter J.C."/>
        </authorList>
    </citation>
    <scope>NUCLEOTIDE SEQUENCE [LARGE SCALE GENOMIC DNA]</scope>
    <source>
        <strain>ATCC 35210 / DSM 4680 / CIP 102532 / B31</strain>
    </source>
</reference>
<reference key="2">
    <citation type="journal article" date="2002" name="Mol. Cell">
        <title>ResT, a telomere resolvase encoded by the Lyme disease spirochete.</title>
        <authorList>
            <person name="Kobryn K."/>
            <person name="Chaconas G."/>
        </authorList>
    </citation>
    <scope>FUNCTION</scope>
    <scope>SUBSTRATE SPECIFICITY</scope>
    <scope>NO COFACTORS</scope>
    <scope>MUTAGENESIS OF TYR-335</scope>
    <scope>DNA-BINDING</scope>
    <source>
        <strain>ATCC 35210 / DSM 4680 / CIP 102532 / B31</strain>
    </source>
</reference>
<reference key="3">
    <citation type="journal article" date="2003" name="Mol. Microbiol.">
        <title>Sequence-specific recognition but position-dependent cleavage of two distinct telomeres by the Borrelia burgdorferi telomere resolvase, ResT.</title>
        <authorList>
            <person name="Tourand Y."/>
            <person name="Kobryn K."/>
            <person name="Chaconas G."/>
        </authorList>
    </citation>
    <scope>FUNCTION</scope>
    <scope>SUBSTRATE SPECIFICITY</scope>
    <scope>NO COFACTORS</scope>
    <source>
        <strain>ATCC 35210 / DSM 4680 / CIP 102532 / B31</strain>
    </source>
</reference>
<geneLocation type="plasmid">
    <name>cp26</name>
    <name>circular 26 kb</name>
</geneLocation>
<evidence type="ECO:0000269" key="1">
    <source>
    </source>
</evidence>
<evidence type="ECO:0000269" key="2">
    <source>
    </source>
</evidence>
<evidence type="ECO:0000303" key="3">
    <source>
    </source>
</evidence>
<evidence type="ECO:0000305" key="4"/>
<evidence type="ECO:0000305" key="5">
    <source>
    </source>
</evidence>
<evidence type="ECO:0000305" key="6">
    <source>
    </source>
</evidence>
<sequence>MPPKVKIKNDFEIFRKELEILYKKYLNNELSYLKLKEKLKILAENHKAILFRKDKFTNRSIILNLSKTRKIIKEYINLSVIERIRRDNTFLFFWKSRRIKELKNIGIKDRKKIEELIFSNQMNDEKSYFQYFIDLFVTPKWLNDYAHKYKIEKINSYRKEQIFVKINLNTYIEIIKLLLNQSRDIRLKFYGVLMAIGRRPVEVMKLSQFYIADKNHIRMEFIAKKRENNIVNEVVFPVFADPELIINSIKEIRYMEQTENLTKEIISSNLAYSYNRLFRQIFNNIFAPEESVYFCRAIYCKFSYLAFAPKNMEMNYWITKVLGHEPNDITTAFHYNRYVLDNLDDKADNSLLTLLNQRIYTYVRRKATYSTLTMDRLESLIKEHHIFDDNYIKTLIVIKNLMLKDNLETLAMVRGLNVKIRKAFKATYGYNYNYIKLTEYLSIIFNYKL</sequence>
<protein>
    <recommendedName>
        <fullName evidence="3">Telomere resolvase ResT</fullName>
        <ecNumber evidence="1 2">3.1.22.-</ecNumber>
    </recommendedName>
</protein>
<name>REST_BORBU</name>
<dbReference type="EC" id="3.1.22.-" evidence="1 2"/>
<dbReference type="EMBL" id="AE000792">
    <property type="protein sequence ID" value="AAC66333.1"/>
    <property type="molecule type" value="Genomic_DNA"/>
</dbReference>
<dbReference type="PIR" id="G70216">
    <property type="entry name" value="G70216"/>
</dbReference>
<dbReference type="RefSeq" id="NP_046989.1">
    <property type="nucleotide sequence ID" value="NC_001903.1"/>
</dbReference>
<dbReference type="RefSeq" id="WP_010256138.1">
    <property type="nucleotide sequence ID" value="NC_001903.1"/>
</dbReference>
<dbReference type="SMR" id="O50979"/>
<dbReference type="BindingDB" id="O50979"/>
<dbReference type="ChEMBL" id="CHEMBL1667698"/>
<dbReference type="EnsemblBacteria" id="AAC66333">
    <property type="protein sequence ID" value="AAC66333"/>
    <property type="gene ID" value="BB_B03"/>
</dbReference>
<dbReference type="GeneID" id="56568496"/>
<dbReference type="KEGG" id="bbu:BB_B03"/>
<dbReference type="PATRIC" id="fig|224326.49.peg.1592"/>
<dbReference type="HOGENOM" id="CLU_049289_0_0_12"/>
<dbReference type="OrthoDB" id="350021at2"/>
<dbReference type="PRO" id="PR:O50979"/>
<dbReference type="Proteomes" id="UP000001807">
    <property type="component" value="Plasmid cp26"/>
</dbReference>
<dbReference type="GO" id="GO:0005737">
    <property type="term" value="C:cytoplasm"/>
    <property type="evidence" value="ECO:0007669"/>
    <property type="project" value="UniProtKB-KW"/>
</dbReference>
<dbReference type="GO" id="GO:0009295">
    <property type="term" value="C:nucleoid"/>
    <property type="evidence" value="ECO:0007669"/>
    <property type="project" value="UniProtKB-SubCell"/>
</dbReference>
<dbReference type="GO" id="GO:0003677">
    <property type="term" value="F:DNA binding"/>
    <property type="evidence" value="ECO:0007669"/>
    <property type="project" value="UniProtKB-KW"/>
</dbReference>
<dbReference type="GO" id="GO:0004519">
    <property type="term" value="F:endonuclease activity"/>
    <property type="evidence" value="ECO:0007669"/>
    <property type="project" value="UniProtKB-KW"/>
</dbReference>
<dbReference type="GO" id="GO:0006310">
    <property type="term" value="P:DNA recombination"/>
    <property type="evidence" value="ECO:0007669"/>
    <property type="project" value="UniProtKB-KW"/>
</dbReference>
<dbReference type="Gene3D" id="1.10.443.30">
    <property type="entry name" value="Telomere resolvase"/>
    <property type="match status" value="1"/>
</dbReference>
<dbReference type="InterPro" id="IPR032047">
    <property type="entry name" value="ResT/TelK_cat"/>
</dbReference>
<dbReference type="InterPro" id="IPR038280">
    <property type="entry name" value="ResT/TelK_cat_sf"/>
</dbReference>
<dbReference type="Pfam" id="PF16684">
    <property type="entry name" value="ResT-TelK_cat"/>
    <property type="match status" value="1"/>
</dbReference>
<feature type="chain" id="PRO_0000097254" description="Telomere resolvase ResT">
    <location>
        <begin position="1"/>
        <end position="449"/>
    </location>
</feature>
<feature type="mutagenesis site" description="Loss of activity." evidence="1">
    <original>Y</original>
    <variation>F</variation>
    <location>
        <position position="335"/>
    </location>
</feature>